<proteinExistence type="inferred from homology"/>
<dbReference type="EMBL" id="AE000666">
    <property type="protein sequence ID" value="AAB86066.1"/>
    <property type="molecule type" value="Genomic_DNA"/>
</dbReference>
<dbReference type="PIR" id="F69079">
    <property type="entry name" value="F69079"/>
</dbReference>
<dbReference type="RefSeq" id="WP_010877201.1">
    <property type="nucleotide sequence ID" value="NC_000916.1"/>
</dbReference>
<dbReference type="SMR" id="O27630"/>
<dbReference type="FunCoup" id="O27630">
    <property type="interactions" value="146"/>
</dbReference>
<dbReference type="STRING" id="187420.MTH_1593"/>
<dbReference type="PaxDb" id="187420-MTH_1593"/>
<dbReference type="EnsemblBacteria" id="AAB86066">
    <property type="protein sequence ID" value="AAB86066"/>
    <property type="gene ID" value="MTH_1593"/>
</dbReference>
<dbReference type="KEGG" id="mth:MTH_1593"/>
<dbReference type="PATRIC" id="fig|187420.15.peg.1556"/>
<dbReference type="HOGENOM" id="CLU_062507_1_0_2"/>
<dbReference type="InParanoid" id="O27630"/>
<dbReference type="Proteomes" id="UP000005223">
    <property type="component" value="Chromosome"/>
</dbReference>
<dbReference type="GO" id="GO:1990904">
    <property type="term" value="C:ribonucleoprotein complex"/>
    <property type="evidence" value="ECO:0007669"/>
    <property type="project" value="UniProtKB-KW"/>
</dbReference>
<dbReference type="GO" id="GO:0005840">
    <property type="term" value="C:ribosome"/>
    <property type="evidence" value="ECO:0007669"/>
    <property type="project" value="UniProtKB-KW"/>
</dbReference>
<dbReference type="GO" id="GO:0003735">
    <property type="term" value="F:structural constituent of ribosome"/>
    <property type="evidence" value="ECO:0007669"/>
    <property type="project" value="InterPro"/>
</dbReference>
<dbReference type="GO" id="GO:0006412">
    <property type="term" value="P:translation"/>
    <property type="evidence" value="ECO:0007669"/>
    <property type="project" value="UniProtKB-UniRule"/>
</dbReference>
<dbReference type="HAMAP" id="MF_00359">
    <property type="entry name" value="Ribosomal_eS1"/>
    <property type="match status" value="1"/>
</dbReference>
<dbReference type="InterPro" id="IPR001593">
    <property type="entry name" value="Ribosomal_eS1"/>
</dbReference>
<dbReference type="InterPro" id="IPR030838">
    <property type="entry name" value="Ribosomal_eS1_arc"/>
</dbReference>
<dbReference type="NCBIfam" id="NF003142">
    <property type="entry name" value="PRK04057.1"/>
    <property type="match status" value="1"/>
</dbReference>
<dbReference type="PANTHER" id="PTHR11830">
    <property type="entry name" value="40S RIBOSOMAL PROTEIN S3A"/>
    <property type="match status" value="1"/>
</dbReference>
<dbReference type="Pfam" id="PF01015">
    <property type="entry name" value="Ribosomal_S3Ae"/>
    <property type="match status" value="1"/>
</dbReference>
<dbReference type="SMART" id="SM01397">
    <property type="entry name" value="Ribosomal_S3Ae"/>
    <property type="match status" value="1"/>
</dbReference>
<reference key="1">
    <citation type="journal article" date="1997" name="J. Bacteriol.">
        <title>Complete genome sequence of Methanobacterium thermoautotrophicum deltaH: functional analysis and comparative genomics.</title>
        <authorList>
            <person name="Smith D.R."/>
            <person name="Doucette-Stamm L.A."/>
            <person name="Deloughery C."/>
            <person name="Lee H.-M."/>
            <person name="Dubois J."/>
            <person name="Aldredge T."/>
            <person name="Bashirzadeh R."/>
            <person name="Blakely D."/>
            <person name="Cook R."/>
            <person name="Gilbert K."/>
            <person name="Harrison D."/>
            <person name="Hoang L."/>
            <person name="Keagle P."/>
            <person name="Lumm W."/>
            <person name="Pothier B."/>
            <person name="Qiu D."/>
            <person name="Spadafora R."/>
            <person name="Vicare R."/>
            <person name="Wang Y."/>
            <person name="Wierzbowski J."/>
            <person name="Gibson R."/>
            <person name="Jiwani N."/>
            <person name="Caruso A."/>
            <person name="Bush D."/>
            <person name="Safer H."/>
            <person name="Patwell D."/>
            <person name="Prabhakar S."/>
            <person name="McDougall S."/>
            <person name="Shimer G."/>
            <person name="Goyal A."/>
            <person name="Pietrovski S."/>
            <person name="Church G.M."/>
            <person name="Daniels C.J."/>
            <person name="Mao J.-I."/>
            <person name="Rice P."/>
            <person name="Noelling J."/>
            <person name="Reeve J.N."/>
        </authorList>
    </citation>
    <scope>NUCLEOTIDE SEQUENCE [LARGE SCALE GENOMIC DNA]</scope>
    <source>
        <strain>ATCC 29096 / DSM 1053 / JCM 10044 / NBRC 100330 / Delta H</strain>
    </source>
</reference>
<comment type="similarity">
    <text evidence="1">Belongs to the eukaryotic ribosomal protein eS1 family.</text>
</comment>
<accession>O27630</accession>
<organism>
    <name type="scientific">Methanothermobacter thermautotrophicus (strain ATCC 29096 / DSM 1053 / JCM 10044 / NBRC 100330 / Delta H)</name>
    <name type="common">Methanobacterium thermoautotrophicum</name>
    <dbReference type="NCBI Taxonomy" id="187420"/>
    <lineage>
        <taxon>Archaea</taxon>
        <taxon>Methanobacteriati</taxon>
        <taxon>Methanobacteriota</taxon>
        <taxon>Methanomada group</taxon>
        <taxon>Methanobacteria</taxon>
        <taxon>Methanobacteriales</taxon>
        <taxon>Methanobacteriaceae</taxon>
        <taxon>Methanothermobacter</taxon>
    </lineage>
</organism>
<gene>
    <name evidence="1" type="primary">rps3ae</name>
    <name type="ordered locus">MTH_1593</name>
</gene>
<feature type="chain" id="PRO_0000153552" description="Small ribosomal subunit protein eS1">
    <location>
        <begin position="1"/>
        <end position="195"/>
    </location>
</feature>
<protein>
    <recommendedName>
        <fullName evidence="1">Small ribosomal subunit protein eS1</fullName>
    </recommendedName>
    <alternativeName>
        <fullName evidence="2">30S ribosomal protein S3Ae</fullName>
    </alternativeName>
    <alternativeName>
        <fullName evidence="1">Ribosomal protein S1e</fullName>
    </alternativeName>
</protein>
<evidence type="ECO:0000255" key="1">
    <source>
        <dbReference type="HAMAP-Rule" id="MF_00359"/>
    </source>
</evidence>
<evidence type="ECO:0000305" key="2"/>
<keyword id="KW-1185">Reference proteome</keyword>
<keyword id="KW-0687">Ribonucleoprotein</keyword>
<keyword id="KW-0689">Ribosomal protein</keyword>
<sequence>MAKARRRRVRDTWKEKKWYVIKSPKLFGENEIGTTPSRDPDFLLKRRVEATMRELTGDFSKQYVKLKFQIDSVAGSEATTRFIGHQVTTDYVRSMIRRGTSRVDAPVIVETKDGYKLKVHPLAITIRRAKSSQQKYMRQSIEEHLREIASEKTFEELVEGIVTGKIASEIYHQAKKIYPLKRVEIIKSRVLEEPA</sequence>
<name>RS3A_METTH</name>